<dbReference type="EMBL" id="CP001657">
    <property type="protein sequence ID" value="ACT11678.1"/>
    <property type="molecule type" value="Genomic_DNA"/>
</dbReference>
<dbReference type="RefSeq" id="WP_012773325.1">
    <property type="nucleotide sequence ID" value="NC_012917.1"/>
</dbReference>
<dbReference type="SMR" id="C6D8X0"/>
<dbReference type="STRING" id="561230.PC1_0623"/>
<dbReference type="GeneID" id="67795539"/>
<dbReference type="KEGG" id="pct:PC1_0623"/>
<dbReference type="eggNOG" id="COG0509">
    <property type="taxonomic scope" value="Bacteria"/>
</dbReference>
<dbReference type="HOGENOM" id="CLU_097408_2_1_6"/>
<dbReference type="OrthoDB" id="9796712at2"/>
<dbReference type="Proteomes" id="UP000002736">
    <property type="component" value="Chromosome"/>
</dbReference>
<dbReference type="GO" id="GO:0005829">
    <property type="term" value="C:cytosol"/>
    <property type="evidence" value="ECO:0007669"/>
    <property type="project" value="TreeGrafter"/>
</dbReference>
<dbReference type="GO" id="GO:0005960">
    <property type="term" value="C:glycine cleavage complex"/>
    <property type="evidence" value="ECO:0007669"/>
    <property type="project" value="InterPro"/>
</dbReference>
<dbReference type="GO" id="GO:0019464">
    <property type="term" value="P:glycine decarboxylation via glycine cleavage system"/>
    <property type="evidence" value="ECO:0007669"/>
    <property type="project" value="UniProtKB-UniRule"/>
</dbReference>
<dbReference type="CDD" id="cd06848">
    <property type="entry name" value="GCS_H"/>
    <property type="match status" value="1"/>
</dbReference>
<dbReference type="FunFam" id="2.40.50.100:FF:000011">
    <property type="entry name" value="Glycine cleavage system H protein"/>
    <property type="match status" value="1"/>
</dbReference>
<dbReference type="Gene3D" id="2.40.50.100">
    <property type="match status" value="1"/>
</dbReference>
<dbReference type="HAMAP" id="MF_00272">
    <property type="entry name" value="GcvH"/>
    <property type="match status" value="1"/>
</dbReference>
<dbReference type="InterPro" id="IPR003016">
    <property type="entry name" value="2-oxoA_DH_lipoyl-BS"/>
</dbReference>
<dbReference type="InterPro" id="IPR000089">
    <property type="entry name" value="Biotin_lipoyl"/>
</dbReference>
<dbReference type="InterPro" id="IPR002930">
    <property type="entry name" value="GCV_H"/>
</dbReference>
<dbReference type="InterPro" id="IPR033753">
    <property type="entry name" value="GCV_H/Fam206"/>
</dbReference>
<dbReference type="InterPro" id="IPR017453">
    <property type="entry name" value="GCV_H_sub"/>
</dbReference>
<dbReference type="InterPro" id="IPR011053">
    <property type="entry name" value="Single_hybrid_motif"/>
</dbReference>
<dbReference type="NCBIfam" id="TIGR00527">
    <property type="entry name" value="gcvH"/>
    <property type="match status" value="1"/>
</dbReference>
<dbReference type="NCBIfam" id="NF002270">
    <property type="entry name" value="PRK01202.1"/>
    <property type="match status" value="1"/>
</dbReference>
<dbReference type="PANTHER" id="PTHR11715">
    <property type="entry name" value="GLYCINE CLEAVAGE SYSTEM H PROTEIN"/>
    <property type="match status" value="1"/>
</dbReference>
<dbReference type="PANTHER" id="PTHR11715:SF3">
    <property type="entry name" value="GLYCINE CLEAVAGE SYSTEM H PROTEIN-RELATED"/>
    <property type="match status" value="1"/>
</dbReference>
<dbReference type="Pfam" id="PF01597">
    <property type="entry name" value="GCV_H"/>
    <property type="match status" value="1"/>
</dbReference>
<dbReference type="SUPFAM" id="SSF51230">
    <property type="entry name" value="Single hybrid motif"/>
    <property type="match status" value="1"/>
</dbReference>
<dbReference type="PROSITE" id="PS50968">
    <property type="entry name" value="BIOTINYL_LIPOYL"/>
    <property type="match status" value="1"/>
</dbReference>
<dbReference type="PROSITE" id="PS00189">
    <property type="entry name" value="LIPOYL"/>
    <property type="match status" value="1"/>
</dbReference>
<keyword id="KW-0450">Lipoyl</keyword>
<gene>
    <name evidence="1" type="primary">gcvH</name>
    <name type="ordered locus">PC1_0623</name>
</gene>
<comment type="function">
    <text evidence="1">The glycine cleavage system catalyzes the degradation of glycine. The H protein shuttles the methylamine group of glycine from the P protein to the T protein.</text>
</comment>
<comment type="cofactor">
    <cofactor evidence="1">
        <name>(R)-lipoate</name>
        <dbReference type="ChEBI" id="CHEBI:83088"/>
    </cofactor>
    <text evidence="1">Binds 1 lipoyl cofactor covalently.</text>
</comment>
<comment type="subunit">
    <text evidence="1">The glycine cleavage system is composed of four proteins: P, T, L and H.</text>
</comment>
<comment type="similarity">
    <text evidence="1">Belongs to the GcvH family.</text>
</comment>
<organism>
    <name type="scientific">Pectobacterium carotovorum subsp. carotovorum (strain PC1)</name>
    <dbReference type="NCBI Taxonomy" id="561230"/>
    <lineage>
        <taxon>Bacteria</taxon>
        <taxon>Pseudomonadati</taxon>
        <taxon>Pseudomonadota</taxon>
        <taxon>Gammaproteobacteria</taxon>
        <taxon>Enterobacterales</taxon>
        <taxon>Pectobacteriaceae</taxon>
        <taxon>Pectobacterium</taxon>
    </lineage>
</organism>
<sequence length="130" mass="14018">MSNVPAELKYTTSHEWVLHEGGGIYSVGITEHAQELLGDMVFIDLPEVGTVVAAGDDCAVAESVKAASDIYAPISGEIVEVNDDLESSPELVNSAPYADGWLFRIRISDESDLDELLDAEGYQASLEEDE</sequence>
<name>GCSH_PECCP</name>
<proteinExistence type="inferred from homology"/>
<accession>C6D8X0</accession>
<reference key="1">
    <citation type="submission" date="2009-07" db="EMBL/GenBank/DDBJ databases">
        <title>Complete sequence of Pectobacterium carotovorum subsp. carotovorum PC1.</title>
        <authorList>
            <consortium name="US DOE Joint Genome Institute"/>
            <person name="Lucas S."/>
            <person name="Copeland A."/>
            <person name="Lapidus A."/>
            <person name="Glavina del Rio T."/>
            <person name="Tice H."/>
            <person name="Bruce D."/>
            <person name="Goodwin L."/>
            <person name="Pitluck S."/>
            <person name="Munk A.C."/>
            <person name="Brettin T."/>
            <person name="Detter J.C."/>
            <person name="Han C."/>
            <person name="Tapia R."/>
            <person name="Larimer F."/>
            <person name="Land M."/>
            <person name="Hauser L."/>
            <person name="Kyrpides N."/>
            <person name="Mikhailova N."/>
            <person name="Balakrishnan V."/>
            <person name="Glasner J."/>
            <person name="Perna N.T."/>
        </authorList>
    </citation>
    <scope>NUCLEOTIDE SEQUENCE [LARGE SCALE GENOMIC DNA]</scope>
    <source>
        <strain>PC1</strain>
    </source>
</reference>
<evidence type="ECO:0000255" key="1">
    <source>
        <dbReference type="HAMAP-Rule" id="MF_00272"/>
    </source>
</evidence>
<evidence type="ECO:0000255" key="2">
    <source>
        <dbReference type="PROSITE-ProRule" id="PRU01066"/>
    </source>
</evidence>
<protein>
    <recommendedName>
        <fullName evidence="1">Glycine cleavage system H protein</fullName>
    </recommendedName>
</protein>
<feature type="chain" id="PRO_1000204751" description="Glycine cleavage system H protein">
    <location>
        <begin position="1"/>
        <end position="130"/>
    </location>
</feature>
<feature type="domain" description="Lipoyl-binding" evidence="2">
    <location>
        <begin position="24"/>
        <end position="106"/>
    </location>
</feature>
<feature type="modified residue" description="N6-lipoyllysine" evidence="1">
    <location>
        <position position="65"/>
    </location>
</feature>